<accession>O51642</accession>
<comment type="function">
    <text evidence="1">This protein is located at the 30S-50S ribosomal subunit interface and may play a role in the structure and function of the aminoacyl-tRNA binding site.</text>
</comment>
<comment type="similarity">
    <text evidence="2">Belongs to the bacterial ribosomal protein bL19 family.</text>
</comment>
<dbReference type="EMBL" id="AE000783">
    <property type="protein sequence ID" value="AAC67044.1"/>
    <property type="molecule type" value="Genomic_DNA"/>
</dbReference>
<dbReference type="PIR" id="B70187">
    <property type="entry name" value="B70187"/>
</dbReference>
<dbReference type="RefSeq" id="NP_212833.1">
    <property type="nucleotide sequence ID" value="NC_001318.1"/>
</dbReference>
<dbReference type="RefSeq" id="WP_002656814.1">
    <property type="nucleotide sequence ID" value="NC_001318.1"/>
</dbReference>
<dbReference type="PDB" id="8FMW">
    <property type="method" value="EM"/>
    <property type="resolution" value="2.86 A"/>
    <property type="chains" value="AR=1-117"/>
</dbReference>
<dbReference type="PDB" id="8FN2">
    <property type="method" value="EM"/>
    <property type="resolution" value="3.40 A"/>
    <property type="chains" value="R=1-117"/>
</dbReference>
<dbReference type="PDBsum" id="8FMW"/>
<dbReference type="PDBsum" id="8FN2"/>
<dbReference type="EMDB" id="EMD-29298"/>
<dbReference type="EMDB" id="EMD-29304"/>
<dbReference type="SMR" id="O51642"/>
<dbReference type="STRING" id="224326.BB_0699"/>
<dbReference type="PaxDb" id="224326-BB_0699"/>
<dbReference type="EnsemblBacteria" id="AAC67044">
    <property type="protein sequence ID" value="AAC67044"/>
    <property type="gene ID" value="BB_0699"/>
</dbReference>
<dbReference type="KEGG" id="bbu:BB_0699"/>
<dbReference type="PATRIC" id="fig|224326.49.peg.1090"/>
<dbReference type="HOGENOM" id="CLU_103507_2_2_12"/>
<dbReference type="OrthoDB" id="9803541at2"/>
<dbReference type="Proteomes" id="UP000001807">
    <property type="component" value="Chromosome"/>
</dbReference>
<dbReference type="GO" id="GO:0022625">
    <property type="term" value="C:cytosolic large ribosomal subunit"/>
    <property type="evidence" value="ECO:0007669"/>
    <property type="project" value="TreeGrafter"/>
</dbReference>
<dbReference type="GO" id="GO:0003735">
    <property type="term" value="F:structural constituent of ribosome"/>
    <property type="evidence" value="ECO:0007669"/>
    <property type="project" value="InterPro"/>
</dbReference>
<dbReference type="GO" id="GO:0006412">
    <property type="term" value="P:translation"/>
    <property type="evidence" value="ECO:0007669"/>
    <property type="project" value="UniProtKB-UniRule"/>
</dbReference>
<dbReference type="Gene3D" id="2.30.30.790">
    <property type="match status" value="1"/>
</dbReference>
<dbReference type="HAMAP" id="MF_00402">
    <property type="entry name" value="Ribosomal_bL19"/>
    <property type="match status" value="1"/>
</dbReference>
<dbReference type="InterPro" id="IPR001857">
    <property type="entry name" value="Ribosomal_bL19"/>
</dbReference>
<dbReference type="InterPro" id="IPR018257">
    <property type="entry name" value="Ribosomal_bL19_CS"/>
</dbReference>
<dbReference type="InterPro" id="IPR038657">
    <property type="entry name" value="Ribosomal_bL19_sf"/>
</dbReference>
<dbReference type="InterPro" id="IPR008991">
    <property type="entry name" value="Translation_prot_SH3-like_sf"/>
</dbReference>
<dbReference type="NCBIfam" id="TIGR01024">
    <property type="entry name" value="rplS_bact"/>
    <property type="match status" value="1"/>
</dbReference>
<dbReference type="PANTHER" id="PTHR15680:SF9">
    <property type="entry name" value="LARGE RIBOSOMAL SUBUNIT PROTEIN BL19M"/>
    <property type="match status" value="1"/>
</dbReference>
<dbReference type="PANTHER" id="PTHR15680">
    <property type="entry name" value="RIBOSOMAL PROTEIN L19"/>
    <property type="match status" value="1"/>
</dbReference>
<dbReference type="Pfam" id="PF01245">
    <property type="entry name" value="Ribosomal_L19"/>
    <property type="match status" value="1"/>
</dbReference>
<dbReference type="PIRSF" id="PIRSF002191">
    <property type="entry name" value="Ribosomal_L19"/>
    <property type="match status" value="1"/>
</dbReference>
<dbReference type="PRINTS" id="PR00061">
    <property type="entry name" value="RIBOSOMALL19"/>
</dbReference>
<dbReference type="SUPFAM" id="SSF50104">
    <property type="entry name" value="Translation proteins SH3-like domain"/>
    <property type="match status" value="1"/>
</dbReference>
<dbReference type="PROSITE" id="PS01015">
    <property type="entry name" value="RIBOSOMAL_L19"/>
    <property type="match status" value="1"/>
</dbReference>
<sequence length="121" mass="14011">MDLIRKIEAQNKKNEAFVFNVGDTVRVVYKIIEGSNERLQSFEGIVISFQNKGIGKTFLIRKISSGIGVEKIFPVYSPIIEKVEVLRRGKVRRAKLYYMRNRIGKAAMKIKERLTIKKVKH</sequence>
<keyword id="KW-0002">3D-structure</keyword>
<keyword id="KW-1185">Reference proteome</keyword>
<keyword id="KW-0687">Ribonucleoprotein</keyword>
<keyword id="KW-0689">Ribosomal protein</keyword>
<feature type="chain" id="PRO_0000163419" description="Large ribosomal subunit protein bL19">
    <location>
        <begin position="1"/>
        <end position="121"/>
    </location>
</feature>
<feature type="helix" evidence="3">
    <location>
        <begin position="3"/>
        <end position="11"/>
    </location>
</feature>
<feature type="strand" evidence="3">
    <location>
        <begin position="24"/>
        <end position="33"/>
    </location>
</feature>
<feature type="strand" evidence="3">
    <location>
        <begin position="36"/>
        <end position="49"/>
    </location>
</feature>
<feature type="helix" evidence="3">
    <location>
        <begin position="53"/>
        <end position="55"/>
    </location>
</feature>
<feature type="strand" evidence="3">
    <location>
        <begin position="57"/>
        <end position="64"/>
    </location>
</feature>
<feature type="strand" evidence="3">
    <location>
        <begin position="67"/>
        <end position="74"/>
    </location>
</feature>
<feature type="strand" evidence="3">
    <location>
        <begin position="80"/>
        <end position="87"/>
    </location>
</feature>
<feature type="strand" evidence="3">
    <location>
        <begin position="92"/>
        <end position="94"/>
    </location>
</feature>
<feature type="helix" evidence="3">
    <location>
        <begin position="97"/>
        <end position="100"/>
    </location>
</feature>
<feature type="helix" evidence="3">
    <location>
        <begin position="104"/>
        <end position="107"/>
    </location>
</feature>
<gene>
    <name type="primary">rplS</name>
    <name type="ordered locus">BB_0699</name>
</gene>
<protein>
    <recommendedName>
        <fullName evidence="2">Large ribosomal subunit protein bL19</fullName>
    </recommendedName>
    <alternativeName>
        <fullName>50S ribosomal protein L19</fullName>
    </alternativeName>
</protein>
<evidence type="ECO:0000250" key="1"/>
<evidence type="ECO:0000305" key="2"/>
<evidence type="ECO:0007829" key="3">
    <source>
        <dbReference type="PDB" id="8FN2"/>
    </source>
</evidence>
<organism>
    <name type="scientific">Borreliella burgdorferi (strain ATCC 35210 / DSM 4680 / CIP 102532 / B31)</name>
    <name type="common">Borrelia burgdorferi</name>
    <dbReference type="NCBI Taxonomy" id="224326"/>
    <lineage>
        <taxon>Bacteria</taxon>
        <taxon>Pseudomonadati</taxon>
        <taxon>Spirochaetota</taxon>
        <taxon>Spirochaetia</taxon>
        <taxon>Spirochaetales</taxon>
        <taxon>Borreliaceae</taxon>
        <taxon>Borreliella</taxon>
    </lineage>
</organism>
<reference key="1">
    <citation type="journal article" date="1997" name="Nature">
        <title>Genomic sequence of a Lyme disease spirochaete, Borrelia burgdorferi.</title>
        <authorList>
            <person name="Fraser C.M."/>
            <person name="Casjens S."/>
            <person name="Huang W.M."/>
            <person name="Sutton G.G."/>
            <person name="Clayton R.A."/>
            <person name="Lathigra R."/>
            <person name="White O."/>
            <person name="Ketchum K.A."/>
            <person name="Dodson R.J."/>
            <person name="Hickey E.K."/>
            <person name="Gwinn M.L."/>
            <person name="Dougherty B.A."/>
            <person name="Tomb J.-F."/>
            <person name="Fleischmann R.D."/>
            <person name="Richardson D.L."/>
            <person name="Peterson J.D."/>
            <person name="Kerlavage A.R."/>
            <person name="Quackenbush J."/>
            <person name="Salzberg S.L."/>
            <person name="Hanson M."/>
            <person name="van Vugt R."/>
            <person name="Palmer N."/>
            <person name="Adams M.D."/>
            <person name="Gocayne J.D."/>
            <person name="Weidman J.F."/>
            <person name="Utterback T.R."/>
            <person name="Watthey L."/>
            <person name="McDonald L.A."/>
            <person name="Artiach P."/>
            <person name="Bowman C."/>
            <person name="Garland S.A."/>
            <person name="Fujii C."/>
            <person name="Cotton M.D."/>
            <person name="Horst K."/>
            <person name="Roberts K.M."/>
            <person name="Hatch B."/>
            <person name="Smith H.O."/>
            <person name="Venter J.C."/>
        </authorList>
    </citation>
    <scope>NUCLEOTIDE SEQUENCE [LARGE SCALE GENOMIC DNA]</scope>
    <source>
        <strain>ATCC 35210 / DSM 4680 / CIP 102532 / B31</strain>
    </source>
</reference>
<proteinExistence type="evidence at protein level"/>
<name>RL19_BORBU</name>